<dbReference type="EC" id="2.7.14.1" evidence="1"/>
<dbReference type="EMBL" id="AP006627">
    <property type="protein sequence ID" value="BAD62663.1"/>
    <property type="molecule type" value="Genomic_DNA"/>
</dbReference>
<dbReference type="RefSeq" id="WP_011244984.1">
    <property type="nucleotide sequence ID" value="NC_006582.1"/>
</dbReference>
<dbReference type="SMR" id="Q5WLU2"/>
<dbReference type="STRING" id="66692.ABC0120"/>
<dbReference type="KEGG" id="bcl:ABC0120"/>
<dbReference type="eggNOG" id="COG3869">
    <property type="taxonomic scope" value="Bacteria"/>
</dbReference>
<dbReference type="HOGENOM" id="CLU_066591_1_0_9"/>
<dbReference type="OrthoDB" id="9791353at2"/>
<dbReference type="Proteomes" id="UP000001168">
    <property type="component" value="Chromosome"/>
</dbReference>
<dbReference type="GO" id="GO:0005615">
    <property type="term" value="C:extracellular space"/>
    <property type="evidence" value="ECO:0007669"/>
    <property type="project" value="TreeGrafter"/>
</dbReference>
<dbReference type="GO" id="GO:0005524">
    <property type="term" value="F:ATP binding"/>
    <property type="evidence" value="ECO:0007669"/>
    <property type="project" value="UniProtKB-KW"/>
</dbReference>
<dbReference type="GO" id="GO:0004111">
    <property type="term" value="F:creatine kinase activity"/>
    <property type="evidence" value="ECO:0007669"/>
    <property type="project" value="InterPro"/>
</dbReference>
<dbReference type="GO" id="GO:0004672">
    <property type="term" value="F:protein kinase activity"/>
    <property type="evidence" value="ECO:0007669"/>
    <property type="project" value="UniProtKB-UniRule"/>
</dbReference>
<dbReference type="GO" id="GO:0046314">
    <property type="term" value="P:phosphocreatine biosynthetic process"/>
    <property type="evidence" value="ECO:0007669"/>
    <property type="project" value="InterPro"/>
</dbReference>
<dbReference type="CDD" id="cd07930">
    <property type="entry name" value="bacterial_phosphagen_kinase"/>
    <property type="match status" value="1"/>
</dbReference>
<dbReference type="FunFam" id="3.30.590.10:FF:000007">
    <property type="entry name" value="Protein-arginine kinase"/>
    <property type="match status" value="1"/>
</dbReference>
<dbReference type="Gene3D" id="3.30.590.10">
    <property type="entry name" value="Glutamine synthetase/guanido kinase, catalytic domain"/>
    <property type="match status" value="1"/>
</dbReference>
<dbReference type="HAMAP" id="MF_00602">
    <property type="entry name" value="Prot_Arg_kinase"/>
    <property type="match status" value="1"/>
</dbReference>
<dbReference type="InterPro" id="IPR023660">
    <property type="entry name" value="Arg_Kinase"/>
</dbReference>
<dbReference type="InterPro" id="IPR000749">
    <property type="entry name" value="ATP-guanido_PTrfase"/>
</dbReference>
<dbReference type="InterPro" id="IPR022415">
    <property type="entry name" value="ATP-guanido_PTrfase_AS"/>
</dbReference>
<dbReference type="InterPro" id="IPR022414">
    <property type="entry name" value="ATP-guanido_PTrfase_cat"/>
</dbReference>
<dbReference type="InterPro" id="IPR014746">
    <property type="entry name" value="Gln_synth/guanido_kin_cat_dom"/>
</dbReference>
<dbReference type="NCBIfam" id="NF002194">
    <property type="entry name" value="PRK01059.1-4"/>
    <property type="match status" value="1"/>
</dbReference>
<dbReference type="NCBIfam" id="NF002195">
    <property type="entry name" value="PRK01059.1-5"/>
    <property type="match status" value="1"/>
</dbReference>
<dbReference type="PANTHER" id="PTHR11547:SF38">
    <property type="entry name" value="ARGININE KINASE 1-RELATED"/>
    <property type="match status" value="1"/>
</dbReference>
<dbReference type="PANTHER" id="PTHR11547">
    <property type="entry name" value="ARGININE OR CREATINE KINASE"/>
    <property type="match status" value="1"/>
</dbReference>
<dbReference type="Pfam" id="PF00217">
    <property type="entry name" value="ATP-gua_Ptrans"/>
    <property type="match status" value="1"/>
</dbReference>
<dbReference type="SUPFAM" id="SSF55931">
    <property type="entry name" value="Glutamine synthetase/guanido kinase"/>
    <property type="match status" value="1"/>
</dbReference>
<dbReference type="PROSITE" id="PS00112">
    <property type="entry name" value="PHOSPHAGEN_KINASE"/>
    <property type="match status" value="1"/>
</dbReference>
<dbReference type="PROSITE" id="PS51510">
    <property type="entry name" value="PHOSPHAGEN_KINASE_C"/>
    <property type="match status" value="1"/>
</dbReference>
<comment type="function">
    <text evidence="1">Catalyzes the specific phosphorylation of arginine residues in a large number of proteins. Is part of the bacterial stress response system. Protein arginine phosphorylation has a physiologically important role and is involved in the regulation of many critical cellular processes, such as protein homeostasis, motility, competence, and stringent and stress responses, by regulating gene expression and protein activity.</text>
</comment>
<comment type="catalytic activity">
    <reaction evidence="1">
        <text>L-arginyl-[protein] + ATP = N(omega)-phospho-L-arginyl-[protein] + ADP + H(+)</text>
        <dbReference type="Rhea" id="RHEA:43384"/>
        <dbReference type="Rhea" id="RHEA-COMP:10532"/>
        <dbReference type="Rhea" id="RHEA-COMP:10533"/>
        <dbReference type="ChEBI" id="CHEBI:15378"/>
        <dbReference type="ChEBI" id="CHEBI:29965"/>
        <dbReference type="ChEBI" id="CHEBI:30616"/>
        <dbReference type="ChEBI" id="CHEBI:83226"/>
        <dbReference type="ChEBI" id="CHEBI:456216"/>
        <dbReference type="EC" id="2.7.14.1"/>
    </reaction>
</comment>
<comment type="activity regulation">
    <text evidence="1">Appears to be allosterically activated by the binding of pArg-containing polypeptides to the pArg-binding pocket localized in the C-terminal domain of McsB.</text>
</comment>
<comment type="similarity">
    <text evidence="1">Belongs to the ATP:guanido phosphotransferase family.</text>
</comment>
<gene>
    <name evidence="1" type="primary">mcsB</name>
    <name type="ordered locus">ABC0120</name>
</gene>
<protein>
    <recommendedName>
        <fullName evidence="1">Protein-arginine kinase</fullName>
        <ecNumber evidence="1">2.7.14.1</ecNumber>
    </recommendedName>
</protein>
<accession>Q5WLU2</accession>
<reference key="1">
    <citation type="submission" date="2003-10" db="EMBL/GenBank/DDBJ databases">
        <title>The complete genome sequence of the alkaliphilic Bacillus clausii KSM-K16.</title>
        <authorList>
            <person name="Takaki Y."/>
            <person name="Kageyama Y."/>
            <person name="Shimamura S."/>
            <person name="Suzuki H."/>
            <person name="Nishi S."/>
            <person name="Hatada Y."/>
            <person name="Kawai S."/>
            <person name="Ito S."/>
            <person name="Horikoshi K."/>
        </authorList>
    </citation>
    <scope>NUCLEOTIDE SEQUENCE [LARGE SCALE GENOMIC DNA]</scope>
    <source>
        <strain>KSM-K16</strain>
    </source>
</reference>
<organism>
    <name type="scientific">Shouchella clausii (strain KSM-K16)</name>
    <name type="common">Alkalihalobacillus clausii</name>
    <dbReference type="NCBI Taxonomy" id="66692"/>
    <lineage>
        <taxon>Bacteria</taxon>
        <taxon>Bacillati</taxon>
        <taxon>Bacillota</taxon>
        <taxon>Bacilli</taxon>
        <taxon>Bacillales</taxon>
        <taxon>Bacillaceae</taxon>
        <taxon>Shouchella</taxon>
    </lineage>
</organism>
<keyword id="KW-0021">Allosteric enzyme</keyword>
<keyword id="KW-0067">ATP-binding</keyword>
<keyword id="KW-0418">Kinase</keyword>
<keyword id="KW-0547">Nucleotide-binding</keyword>
<keyword id="KW-1185">Reference proteome</keyword>
<keyword id="KW-0808">Transferase</keyword>
<evidence type="ECO:0000255" key="1">
    <source>
        <dbReference type="HAMAP-Rule" id="MF_00602"/>
    </source>
</evidence>
<name>MCSB_SHOC1</name>
<sequence length="358" mass="40099">MSLDRFLKNAISPWMKKDGSDADIVLSSRIRLARNMSAFTFPMLSSKEEAYAVAKHVKDALGGTQGEALGKAEMLAMEDMRTNDKRMLVEKHLISPHLAEQSKYGMVLLSGDESLSIMINEEDHIRIQSLSAGFELENCLQAANAVDDWVESHLTYAYDSQYGYLTSCPTNVGTGMRASVMIHLPALAMTRQLQRILPAINQLGLVVRGIYGEGSEALGNLFQISNQITLGKTEQDIVDDLQGVVKQLIRQERVARDSLLQHSKLELKDRVFRSYGILANSYIIDSKEATRRLSDVRLGIDLGFIENTAGKILDELMILTQPGFLQQYAKTVLTPEQRDERRAALIRERLKLEHETAD</sequence>
<proteinExistence type="inferred from homology"/>
<feature type="chain" id="PRO_1000025870" description="Protein-arginine kinase">
    <location>
        <begin position="1"/>
        <end position="358"/>
    </location>
</feature>
<feature type="domain" description="Phosphagen kinase C-terminal" evidence="1">
    <location>
        <begin position="24"/>
        <end position="255"/>
    </location>
</feature>
<feature type="short sequence motif" description="RDXXRA motif of the pArg binding pocket involved in allosteric regulation" evidence="1">
    <location>
        <begin position="338"/>
        <end position="343"/>
    </location>
</feature>
<feature type="binding site" evidence="1">
    <location>
        <begin position="27"/>
        <end position="31"/>
    </location>
    <ligand>
        <name>ATP</name>
        <dbReference type="ChEBI" id="CHEBI:30616"/>
    </ligand>
</feature>
<feature type="binding site" evidence="1">
    <location>
        <position position="92"/>
    </location>
    <ligand>
        <name>ATP</name>
        <dbReference type="ChEBI" id="CHEBI:30616"/>
    </ligand>
</feature>
<feature type="binding site" evidence="1">
    <location>
        <position position="126"/>
    </location>
    <ligand>
        <name>ATP</name>
        <dbReference type="ChEBI" id="CHEBI:30616"/>
    </ligand>
</feature>
<feature type="binding site" evidence="1">
    <location>
        <begin position="177"/>
        <end position="181"/>
    </location>
    <ligand>
        <name>ATP</name>
        <dbReference type="ChEBI" id="CHEBI:30616"/>
    </ligand>
</feature>
<feature type="binding site" evidence="1">
    <location>
        <begin position="208"/>
        <end position="213"/>
    </location>
    <ligand>
        <name>ATP</name>
        <dbReference type="ChEBI" id="CHEBI:30616"/>
    </ligand>
</feature>